<gene>
    <name type="primary">speA</name>
    <name type="ordered locus">c3524</name>
</gene>
<name>SPEA_ECOL6</name>
<keyword id="KW-0210">Decarboxylase</keyword>
<keyword id="KW-0456">Lyase</keyword>
<keyword id="KW-0460">Magnesium</keyword>
<keyword id="KW-0479">Metal-binding</keyword>
<keyword id="KW-0574">Periplasm</keyword>
<keyword id="KW-0620">Polyamine biosynthesis</keyword>
<keyword id="KW-0661">Putrescine biosynthesis</keyword>
<keyword id="KW-0663">Pyridoxal phosphate</keyword>
<keyword id="KW-1185">Reference proteome</keyword>
<keyword id="KW-0745">Spermidine biosynthesis</keyword>
<sequence length="658" mass="73886">MSDDMSMGLPSSAGEHGVLRSMQEVAMSSQEASKMLRTYNIAWWGNNYYDVNELGHISVCPDPDVPEARVDLAQLVKTREAQGQRLPALFCFPQILQHRLRSINAAFKRARESYGYNGDYFLVYPIKVNQHRRVIESLIHSGEPLGLEAGSKAELMAVLAHAGMTRSVIVCNGYKDREYIRLALIGEKMGHKVYLVIEKMSEIAIVLDEAERLNVVPRLGVRARLASQGSGKWQSSGGEKSKFGLAATQVLQLVETLREAGRLDSLQLLHFHLGSQMANIRDIATGVRESARFYVELHKLGVNIQCFDVGGGLGVDYEGTRSQSDCSVNYGLNEYANNIIWAIGDACEENGLPHPTVITESGRAVTAHHTVLVSNIIGVERNEYTVPTAPAEDAPRALQSMWETWQEMHEPGTRRSLREWLHDSQMDLHDIHIGYSSGTFSLQERAWAEQLYLSMCHEVQKQLDPQNRAHRPIIDELQERMADKMYVNFSLFQSMPDAWGIDQLFPVLPLEGLDQVPERRAVLLDITCDSDGAIDHYIDGDGIATTMPMPEYDPENPPMLGFFMVGAYQEILGNMHNLFGDTEAVDVFVFPDGSVEVELSDEGDTVADMLQYVQLDPKTLLTQFRDQVKKTDLDAELQQQFLEEFEAGLYGYTYLEDE</sequence>
<protein>
    <recommendedName>
        <fullName>Biosynthetic arginine decarboxylase</fullName>
        <shortName>ADC</shortName>
        <ecNumber>4.1.1.19</ecNumber>
    </recommendedName>
</protein>
<accession>Q8FE34</accession>
<reference key="1">
    <citation type="journal article" date="2002" name="Proc. Natl. Acad. Sci. U.S.A.">
        <title>Extensive mosaic structure revealed by the complete genome sequence of uropathogenic Escherichia coli.</title>
        <authorList>
            <person name="Welch R.A."/>
            <person name="Burland V."/>
            <person name="Plunkett G. III"/>
            <person name="Redford P."/>
            <person name="Roesch P."/>
            <person name="Rasko D."/>
            <person name="Buckles E.L."/>
            <person name="Liou S.-R."/>
            <person name="Boutin A."/>
            <person name="Hackett J."/>
            <person name="Stroud D."/>
            <person name="Mayhew G.F."/>
            <person name="Rose D.J."/>
            <person name="Zhou S."/>
            <person name="Schwartz D.C."/>
            <person name="Perna N.T."/>
            <person name="Mobley H.L.T."/>
            <person name="Donnenberg M.S."/>
            <person name="Blattner F.R."/>
        </authorList>
    </citation>
    <scope>NUCLEOTIDE SEQUENCE [LARGE SCALE GENOMIC DNA]</scope>
    <source>
        <strain>CFT073 / ATCC 700928 / UPEC</strain>
    </source>
</reference>
<dbReference type="EC" id="4.1.1.19"/>
<dbReference type="EMBL" id="AE014075">
    <property type="protein sequence ID" value="AAN81972.1"/>
    <property type="status" value="ALT_INIT"/>
    <property type="molecule type" value="Genomic_DNA"/>
</dbReference>
<dbReference type="RefSeq" id="WP_001295380.1">
    <property type="nucleotide sequence ID" value="NZ_CP051263.1"/>
</dbReference>
<dbReference type="SMR" id="Q8FE34"/>
<dbReference type="STRING" id="199310.c3524"/>
<dbReference type="GeneID" id="93779057"/>
<dbReference type="KEGG" id="ecc:c3524"/>
<dbReference type="eggNOG" id="COG1166">
    <property type="taxonomic scope" value="Bacteria"/>
</dbReference>
<dbReference type="HOGENOM" id="CLU_027243_1_0_6"/>
<dbReference type="UniPathway" id="UPA00186">
    <property type="reaction ID" value="UER00284"/>
</dbReference>
<dbReference type="Proteomes" id="UP000001410">
    <property type="component" value="Chromosome"/>
</dbReference>
<dbReference type="GO" id="GO:0042597">
    <property type="term" value="C:periplasmic space"/>
    <property type="evidence" value="ECO:0007669"/>
    <property type="project" value="UniProtKB-SubCell"/>
</dbReference>
<dbReference type="GO" id="GO:0008792">
    <property type="term" value="F:arginine decarboxylase activity"/>
    <property type="evidence" value="ECO:0007669"/>
    <property type="project" value="UniProtKB-UniRule"/>
</dbReference>
<dbReference type="GO" id="GO:0046872">
    <property type="term" value="F:metal ion binding"/>
    <property type="evidence" value="ECO:0007669"/>
    <property type="project" value="UniProtKB-KW"/>
</dbReference>
<dbReference type="GO" id="GO:0006527">
    <property type="term" value="P:arginine catabolic process"/>
    <property type="evidence" value="ECO:0007669"/>
    <property type="project" value="InterPro"/>
</dbReference>
<dbReference type="GO" id="GO:0033388">
    <property type="term" value="P:putrescine biosynthetic process from arginine"/>
    <property type="evidence" value="ECO:0007669"/>
    <property type="project" value="TreeGrafter"/>
</dbReference>
<dbReference type="GO" id="GO:0008295">
    <property type="term" value="P:spermidine biosynthetic process"/>
    <property type="evidence" value="ECO:0007669"/>
    <property type="project" value="UniProtKB-UniRule"/>
</dbReference>
<dbReference type="CDD" id="cd06830">
    <property type="entry name" value="PLPDE_III_ADC"/>
    <property type="match status" value="1"/>
</dbReference>
<dbReference type="FunFam" id="1.10.287.3440:FF:000001">
    <property type="entry name" value="Biosynthetic arginine decarboxylase"/>
    <property type="match status" value="1"/>
</dbReference>
<dbReference type="FunFam" id="1.20.58.930:FF:000001">
    <property type="entry name" value="Biosynthetic arginine decarboxylase"/>
    <property type="match status" value="1"/>
</dbReference>
<dbReference type="FunFam" id="2.40.37.10:FF:000001">
    <property type="entry name" value="Biosynthetic arginine decarboxylase"/>
    <property type="match status" value="1"/>
</dbReference>
<dbReference type="FunFam" id="3.20.20.10:FF:000001">
    <property type="entry name" value="Biosynthetic arginine decarboxylase"/>
    <property type="match status" value="1"/>
</dbReference>
<dbReference type="Gene3D" id="1.10.287.3440">
    <property type="match status" value="1"/>
</dbReference>
<dbReference type="Gene3D" id="1.20.58.930">
    <property type="match status" value="1"/>
</dbReference>
<dbReference type="Gene3D" id="3.20.20.10">
    <property type="entry name" value="Alanine racemase"/>
    <property type="match status" value="1"/>
</dbReference>
<dbReference type="Gene3D" id="2.40.37.10">
    <property type="entry name" value="Lyase, Ornithine Decarboxylase, Chain A, domain 1"/>
    <property type="match status" value="1"/>
</dbReference>
<dbReference type="HAMAP" id="MF_01417">
    <property type="entry name" value="SpeA"/>
    <property type="match status" value="1"/>
</dbReference>
<dbReference type="InterPro" id="IPR009006">
    <property type="entry name" value="Ala_racemase/Decarboxylase_C"/>
</dbReference>
<dbReference type="InterPro" id="IPR040634">
    <property type="entry name" value="Arg_decarb_HB"/>
</dbReference>
<dbReference type="InterPro" id="IPR041128">
    <property type="entry name" value="Arg_decarbox_C"/>
</dbReference>
<dbReference type="InterPro" id="IPR002985">
    <property type="entry name" value="Arg_decrbxlase"/>
</dbReference>
<dbReference type="InterPro" id="IPR022657">
    <property type="entry name" value="De-COase2_CS"/>
</dbReference>
<dbReference type="InterPro" id="IPR022644">
    <property type="entry name" value="De-COase2_N"/>
</dbReference>
<dbReference type="InterPro" id="IPR022653">
    <property type="entry name" value="De-COase2_pyr-phos_BS"/>
</dbReference>
<dbReference type="InterPro" id="IPR000183">
    <property type="entry name" value="Orn/DAP/Arg_de-COase"/>
</dbReference>
<dbReference type="InterPro" id="IPR029066">
    <property type="entry name" value="PLP-binding_barrel"/>
</dbReference>
<dbReference type="NCBIfam" id="NF003763">
    <property type="entry name" value="PRK05354.1"/>
    <property type="match status" value="1"/>
</dbReference>
<dbReference type="NCBIfam" id="TIGR01273">
    <property type="entry name" value="speA"/>
    <property type="match status" value="1"/>
</dbReference>
<dbReference type="PANTHER" id="PTHR43295">
    <property type="entry name" value="ARGININE DECARBOXYLASE"/>
    <property type="match status" value="1"/>
</dbReference>
<dbReference type="PANTHER" id="PTHR43295:SF9">
    <property type="entry name" value="BIOSYNTHETIC ARGININE DECARBOXYLASE"/>
    <property type="match status" value="1"/>
</dbReference>
<dbReference type="Pfam" id="PF17810">
    <property type="entry name" value="Arg_decarb_HB"/>
    <property type="match status" value="1"/>
</dbReference>
<dbReference type="Pfam" id="PF17944">
    <property type="entry name" value="Arg_decarbox_C"/>
    <property type="match status" value="1"/>
</dbReference>
<dbReference type="Pfam" id="PF02784">
    <property type="entry name" value="Orn_Arg_deC_N"/>
    <property type="match status" value="1"/>
</dbReference>
<dbReference type="PIRSF" id="PIRSF001336">
    <property type="entry name" value="Arg_decrbxlase"/>
    <property type="match status" value="1"/>
</dbReference>
<dbReference type="PRINTS" id="PR01180">
    <property type="entry name" value="ARGDCRBXLASE"/>
</dbReference>
<dbReference type="PRINTS" id="PR01179">
    <property type="entry name" value="ODADCRBXLASE"/>
</dbReference>
<dbReference type="SUPFAM" id="SSF50621">
    <property type="entry name" value="Alanine racemase C-terminal domain-like"/>
    <property type="match status" value="1"/>
</dbReference>
<dbReference type="SUPFAM" id="SSF51419">
    <property type="entry name" value="PLP-binding barrel"/>
    <property type="match status" value="1"/>
</dbReference>
<dbReference type="PROSITE" id="PS00878">
    <property type="entry name" value="ODR_DC_2_1"/>
    <property type="match status" value="1"/>
</dbReference>
<dbReference type="PROSITE" id="PS00879">
    <property type="entry name" value="ODR_DC_2_2"/>
    <property type="match status" value="1"/>
</dbReference>
<evidence type="ECO:0000250" key="1"/>
<evidence type="ECO:0000255" key="2"/>
<evidence type="ECO:0000305" key="3"/>
<proteinExistence type="inferred from homology"/>
<feature type="chain" id="PRO_0000149961" description="Biosynthetic arginine decarboxylase">
    <location>
        <begin position="1"/>
        <end position="658"/>
    </location>
</feature>
<feature type="binding site" evidence="2">
    <location>
        <begin position="307"/>
        <end position="317"/>
    </location>
    <ligand>
        <name>substrate</name>
    </ligand>
</feature>
<feature type="modified residue" description="N6-(pyridoxal phosphate)lysine" evidence="1">
    <location>
        <position position="127"/>
    </location>
</feature>
<organism>
    <name type="scientific">Escherichia coli O6:H1 (strain CFT073 / ATCC 700928 / UPEC)</name>
    <dbReference type="NCBI Taxonomy" id="199310"/>
    <lineage>
        <taxon>Bacteria</taxon>
        <taxon>Pseudomonadati</taxon>
        <taxon>Pseudomonadota</taxon>
        <taxon>Gammaproteobacteria</taxon>
        <taxon>Enterobacterales</taxon>
        <taxon>Enterobacteriaceae</taxon>
        <taxon>Escherichia</taxon>
    </lineage>
</organism>
<comment type="function">
    <text evidence="1">Catalyzes the biosynthesis of agmatine from arginine.</text>
</comment>
<comment type="catalytic activity">
    <reaction>
        <text>L-arginine + H(+) = agmatine + CO2</text>
        <dbReference type="Rhea" id="RHEA:17641"/>
        <dbReference type="ChEBI" id="CHEBI:15378"/>
        <dbReference type="ChEBI" id="CHEBI:16526"/>
        <dbReference type="ChEBI" id="CHEBI:32682"/>
        <dbReference type="ChEBI" id="CHEBI:58145"/>
        <dbReference type="EC" id="4.1.1.19"/>
    </reaction>
</comment>
<comment type="cofactor">
    <cofactor evidence="1">
        <name>Mg(2+)</name>
        <dbReference type="ChEBI" id="CHEBI:18420"/>
    </cofactor>
</comment>
<comment type="cofactor">
    <cofactor evidence="1">
        <name>pyridoxal 5'-phosphate</name>
        <dbReference type="ChEBI" id="CHEBI:597326"/>
    </cofactor>
</comment>
<comment type="pathway">
    <text>Amine and polyamine biosynthesis; agmatine biosynthesis; agmatine from L-arginine: step 1/1.</text>
</comment>
<comment type="subunit">
    <text evidence="1">Homotetramer.</text>
</comment>
<comment type="subcellular location">
    <subcellularLocation>
        <location evidence="1">Periplasm</location>
    </subcellularLocation>
</comment>
<comment type="similarity">
    <text evidence="3">Belongs to the Orn/Lys/Arg decarboxylase class-II family. SpeA subfamily.</text>
</comment>
<comment type="sequence caution" evidence="3">
    <conflict type="erroneous initiation">
        <sequence resource="EMBL-CDS" id="AAN81972"/>
    </conflict>
</comment>